<feature type="chain" id="PRO_0000117738" description="NADH-ubiquinone oxidoreductase chain 3">
    <location>
        <begin position="1"/>
        <end position="117"/>
    </location>
</feature>
<feature type="transmembrane region" description="Helical" evidence="2">
    <location>
        <begin position="4"/>
        <end position="24"/>
    </location>
</feature>
<feature type="transmembrane region" description="Helical" evidence="2">
    <location>
        <begin position="60"/>
        <end position="80"/>
    </location>
</feature>
<feature type="transmembrane region" description="Helical" evidence="2">
    <location>
        <begin position="86"/>
        <end position="106"/>
    </location>
</feature>
<geneLocation type="mitochondrion"/>
<keyword id="KW-0249">Electron transport</keyword>
<keyword id="KW-0472">Membrane</keyword>
<keyword id="KW-0496">Mitochondrion</keyword>
<keyword id="KW-0520">NAD</keyword>
<keyword id="KW-0679">Respiratory chain</keyword>
<keyword id="KW-1278">Translocase</keyword>
<keyword id="KW-0812">Transmembrane</keyword>
<keyword id="KW-1133">Transmembrane helix</keyword>
<keyword id="KW-0813">Transport</keyword>
<keyword id="KW-0830">Ubiquinone</keyword>
<dbReference type="EC" id="7.1.1.2"/>
<dbReference type="EMBL" id="X00432">
    <property type="protein sequence ID" value="CAA25130.1"/>
    <property type="molecule type" value="Genomic_DNA"/>
</dbReference>
<dbReference type="EMBL" id="X03240">
    <property type="protein sequence ID" value="CAA26991.1"/>
    <property type="molecule type" value="Genomic_DNA"/>
</dbReference>
<dbReference type="PIR" id="G25797">
    <property type="entry name" value="G25797"/>
</dbReference>
<dbReference type="RefSeq" id="NP_006908.1">
    <property type="nucleotide sequence ID" value="NC_001322.1"/>
</dbReference>
<dbReference type="SMR" id="P07705"/>
<dbReference type="EnsemblMetazoa" id="GeneID_807626_df_mr">
    <property type="protein sequence ID" value="NP_006908.1"/>
    <property type="gene ID" value="GeneID_807626"/>
</dbReference>
<dbReference type="GeneID" id="807626"/>
<dbReference type="KEGG" id="dya:ND3"/>
<dbReference type="CTD" id="4537"/>
<dbReference type="Proteomes" id="UP000002282">
    <property type="component" value="Mitochondrion"/>
</dbReference>
<dbReference type="GO" id="GO:0031966">
    <property type="term" value="C:mitochondrial membrane"/>
    <property type="evidence" value="ECO:0007669"/>
    <property type="project" value="UniProtKB-SubCell"/>
</dbReference>
<dbReference type="GO" id="GO:0045271">
    <property type="term" value="C:respiratory chain complex I"/>
    <property type="evidence" value="ECO:0007669"/>
    <property type="project" value="EnsemblMetazoa"/>
</dbReference>
<dbReference type="GO" id="GO:0008137">
    <property type="term" value="F:NADH dehydrogenase (ubiquinone) activity"/>
    <property type="evidence" value="ECO:0007669"/>
    <property type="project" value="UniProtKB-EC"/>
</dbReference>
<dbReference type="FunFam" id="1.20.58.1610:FF:000004">
    <property type="entry name" value="NADH-quinone oxidoreductase subunit A"/>
    <property type="match status" value="1"/>
</dbReference>
<dbReference type="Gene3D" id="1.20.58.1610">
    <property type="entry name" value="NADH:ubiquinone/plastoquinone oxidoreductase, chain 3"/>
    <property type="match status" value="1"/>
</dbReference>
<dbReference type="InterPro" id="IPR000440">
    <property type="entry name" value="NADH_UbQ/plastoQ_OxRdtase_su3"/>
</dbReference>
<dbReference type="InterPro" id="IPR038430">
    <property type="entry name" value="NDAH_ubi_oxred_su3_sf"/>
</dbReference>
<dbReference type="PANTHER" id="PTHR11058">
    <property type="entry name" value="NADH-UBIQUINONE OXIDOREDUCTASE CHAIN 3"/>
    <property type="match status" value="1"/>
</dbReference>
<dbReference type="PANTHER" id="PTHR11058:SF9">
    <property type="entry name" value="NADH-UBIQUINONE OXIDOREDUCTASE CHAIN 3"/>
    <property type="match status" value="1"/>
</dbReference>
<dbReference type="Pfam" id="PF00507">
    <property type="entry name" value="Oxidored_q4"/>
    <property type="match status" value="1"/>
</dbReference>
<reference key="1">
    <citation type="journal article" date="1984" name="Nucleic Acids Res.">
        <title>A cluster of six tRNA genes in Drosophila mitochondrial DNA that includes a gene for an unusual tRNAserAGY.</title>
        <authorList>
            <person name="Clary D.O."/>
            <person name="Wolstenholme D.R."/>
        </authorList>
    </citation>
    <scope>NUCLEOTIDE SEQUENCE [GENOMIC DNA]</scope>
    <source>
        <strain>2317.6 Ivory Coast</strain>
    </source>
</reference>
<reference key="2">
    <citation type="journal article" date="1985" name="J. Mol. Evol.">
        <title>The mitochondrial DNA molecular of Drosophila yakuba: nucleotide sequence, gene organization, and genetic code.</title>
        <authorList>
            <person name="Clary D.O."/>
            <person name="Wolstenholme D.R."/>
        </authorList>
    </citation>
    <scope>NUCLEOTIDE SEQUENCE [LARGE SCALE GENOMIC DNA]</scope>
    <source>
        <strain>2317.6 Ivory Coast</strain>
    </source>
</reference>
<name>NU3M_DROYA</name>
<comment type="function">
    <text evidence="1">Core subunit of the mitochondrial membrane respiratory chain NADH dehydrogenase (Complex I) that is believed to belong to the minimal assembly required for catalysis. Complex I functions in the transfer of electrons from NADH to the respiratory chain. The immediate electron acceptor for the enzyme is believed to be ubiquinone (By similarity).</text>
</comment>
<comment type="catalytic activity">
    <reaction>
        <text>a ubiquinone + NADH + 5 H(+)(in) = a ubiquinol + NAD(+) + 4 H(+)(out)</text>
        <dbReference type="Rhea" id="RHEA:29091"/>
        <dbReference type="Rhea" id="RHEA-COMP:9565"/>
        <dbReference type="Rhea" id="RHEA-COMP:9566"/>
        <dbReference type="ChEBI" id="CHEBI:15378"/>
        <dbReference type="ChEBI" id="CHEBI:16389"/>
        <dbReference type="ChEBI" id="CHEBI:17976"/>
        <dbReference type="ChEBI" id="CHEBI:57540"/>
        <dbReference type="ChEBI" id="CHEBI:57945"/>
        <dbReference type="EC" id="7.1.1.2"/>
    </reaction>
</comment>
<comment type="subcellular location">
    <subcellularLocation>
        <location evidence="1">Mitochondrion membrane</location>
        <topology evidence="1">Multi-pass membrane protein</topology>
    </subcellularLocation>
</comment>
<comment type="similarity">
    <text evidence="3">Belongs to the complex I subunit 3 family.</text>
</comment>
<sequence>MFSIIIIASVILLITTVVMFLASILSKKALIDREKSSPFECGFDPKSSSRLPFSLRFFLITIIFLIFDVEIALILPMIIILKYSNIMIWTITSIIFILILLIGLYHEWNQGMLNWSN</sequence>
<gene>
    <name type="primary">mt:ND3</name>
    <name type="synonym">ND3</name>
</gene>
<protein>
    <recommendedName>
        <fullName>NADH-ubiquinone oxidoreductase chain 3</fullName>
        <ecNumber>7.1.1.2</ecNumber>
    </recommendedName>
    <alternativeName>
        <fullName>NADH dehydrogenase subunit 3</fullName>
    </alternativeName>
</protein>
<organism>
    <name type="scientific">Drosophila yakuba</name>
    <name type="common">Fruit fly</name>
    <dbReference type="NCBI Taxonomy" id="7245"/>
    <lineage>
        <taxon>Eukaryota</taxon>
        <taxon>Metazoa</taxon>
        <taxon>Ecdysozoa</taxon>
        <taxon>Arthropoda</taxon>
        <taxon>Hexapoda</taxon>
        <taxon>Insecta</taxon>
        <taxon>Pterygota</taxon>
        <taxon>Neoptera</taxon>
        <taxon>Endopterygota</taxon>
        <taxon>Diptera</taxon>
        <taxon>Brachycera</taxon>
        <taxon>Muscomorpha</taxon>
        <taxon>Ephydroidea</taxon>
        <taxon>Drosophilidae</taxon>
        <taxon>Drosophila</taxon>
        <taxon>Sophophora</taxon>
    </lineage>
</organism>
<accession>P07705</accession>
<proteinExistence type="inferred from homology"/>
<evidence type="ECO:0000250" key="1"/>
<evidence type="ECO:0000255" key="2"/>
<evidence type="ECO:0000305" key="3"/>